<sequence>MHAPSEIRLTFNQDRPQSNEDDGSGLAVQEAKPILQAPPMYKVVLFNDDYTPMDFVVEVLETFFSLNRELATKIMLTVHTEGRAVCGLFTRDIAETKAMQVNQYARESQHPLLCEIEKDG</sequence>
<dbReference type="EMBL" id="AE015451">
    <property type="protein sequence ID" value="AAN69603.1"/>
    <property type="molecule type" value="Genomic_DNA"/>
</dbReference>
<dbReference type="RefSeq" id="NP_746139.1">
    <property type="nucleotide sequence ID" value="NC_002947.4"/>
</dbReference>
<dbReference type="RefSeq" id="WP_003251220.1">
    <property type="nucleotide sequence ID" value="NZ_CP169744.1"/>
</dbReference>
<dbReference type="SMR" id="Q88FS4"/>
<dbReference type="STRING" id="160488.PP_4009"/>
<dbReference type="PaxDb" id="160488-PP_4009"/>
<dbReference type="GeneID" id="83679288"/>
<dbReference type="KEGG" id="ppu:PP_4009"/>
<dbReference type="PATRIC" id="fig|160488.4.peg.4265"/>
<dbReference type="eggNOG" id="COG2127">
    <property type="taxonomic scope" value="Bacteria"/>
</dbReference>
<dbReference type="HOGENOM" id="CLU_134358_2_0_6"/>
<dbReference type="OrthoDB" id="9796121at2"/>
<dbReference type="PhylomeDB" id="Q88FS4"/>
<dbReference type="BioCyc" id="PPUT160488:G1G01-4276-MONOMER"/>
<dbReference type="Proteomes" id="UP000000556">
    <property type="component" value="Chromosome"/>
</dbReference>
<dbReference type="GO" id="GO:0030163">
    <property type="term" value="P:protein catabolic process"/>
    <property type="evidence" value="ECO:0007669"/>
    <property type="project" value="InterPro"/>
</dbReference>
<dbReference type="GO" id="GO:0006508">
    <property type="term" value="P:proteolysis"/>
    <property type="evidence" value="ECO:0007669"/>
    <property type="project" value="UniProtKB-UniRule"/>
</dbReference>
<dbReference type="FunFam" id="3.30.1390.10:FF:000002">
    <property type="entry name" value="ATP-dependent Clp protease adapter protein ClpS"/>
    <property type="match status" value="1"/>
</dbReference>
<dbReference type="Gene3D" id="3.30.1390.10">
    <property type="match status" value="1"/>
</dbReference>
<dbReference type="HAMAP" id="MF_00302">
    <property type="entry name" value="ClpS"/>
    <property type="match status" value="1"/>
</dbReference>
<dbReference type="InterPro" id="IPR022935">
    <property type="entry name" value="ClpS"/>
</dbReference>
<dbReference type="InterPro" id="IPR003769">
    <property type="entry name" value="ClpS_core"/>
</dbReference>
<dbReference type="InterPro" id="IPR014719">
    <property type="entry name" value="Ribosomal_bL12_C/ClpS-like"/>
</dbReference>
<dbReference type="NCBIfam" id="NF000669">
    <property type="entry name" value="PRK00033.1-2"/>
    <property type="match status" value="1"/>
</dbReference>
<dbReference type="NCBIfam" id="NF000672">
    <property type="entry name" value="PRK00033.1-5"/>
    <property type="match status" value="1"/>
</dbReference>
<dbReference type="PANTHER" id="PTHR33473:SF19">
    <property type="entry name" value="ATP-DEPENDENT CLP PROTEASE ADAPTER PROTEIN CLPS"/>
    <property type="match status" value="1"/>
</dbReference>
<dbReference type="PANTHER" id="PTHR33473">
    <property type="entry name" value="ATP-DEPENDENT CLP PROTEASE ADAPTER PROTEIN CLPS1, CHLOROPLASTIC"/>
    <property type="match status" value="1"/>
</dbReference>
<dbReference type="Pfam" id="PF02617">
    <property type="entry name" value="ClpS"/>
    <property type="match status" value="1"/>
</dbReference>
<dbReference type="SUPFAM" id="SSF54736">
    <property type="entry name" value="ClpS-like"/>
    <property type="match status" value="1"/>
</dbReference>
<protein>
    <recommendedName>
        <fullName evidence="1">ATP-dependent Clp protease adapter protein ClpS</fullName>
    </recommendedName>
</protein>
<comment type="function">
    <text evidence="1">Involved in the modulation of the specificity of the ClpAP-mediated ATP-dependent protein degradation.</text>
</comment>
<comment type="subunit">
    <text evidence="1">Binds to the N-terminal domain of the chaperone ClpA.</text>
</comment>
<comment type="similarity">
    <text evidence="1">Belongs to the ClpS family.</text>
</comment>
<gene>
    <name evidence="1" type="primary">clpS</name>
    <name type="ordered locus">PP_4009</name>
</gene>
<accession>Q88FS4</accession>
<proteinExistence type="inferred from homology"/>
<name>CLPS_PSEPK</name>
<evidence type="ECO:0000255" key="1">
    <source>
        <dbReference type="HAMAP-Rule" id="MF_00302"/>
    </source>
</evidence>
<evidence type="ECO:0000256" key="2">
    <source>
        <dbReference type="SAM" id="MobiDB-lite"/>
    </source>
</evidence>
<reference key="1">
    <citation type="journal article" date="2002" name="Environ. Microbiol.">
        <title>Complete genome sequence and comparative analysis of the metabolically versatile Pseudomonas putida KT2440.</title>
        <authorList>
            <person name="Nelson K.E."/>
            <person name="Weinel C."/>
            <person name="Paulsen I.T."/>
            <person name="Dodson R.J."/>
            <person name="Hilbert H."/>
            <person name="Martins dos Santos V.A.P."/>
            <person name="Fouts D.E."/>
            <person name="Gill S.R."/>
            <person name="Pop M."/>
            <person name="Holmes M."/>
            <person name="Brinkac L.M."/>
            <person name="Beanan M.J."/>
            <person name="DeBoy R.T."/>
            <person name="Daugherty S.C."/>
            <person name="Kolonay J.F."/>
            <person name="Madupu R."/>
            <person name="Nelson W.C."/>
            <person name="White O."/>
            <person name="Peterson J.D."/>
            <person name="Khouri H.M."/>
            <person name="Hance I."/>
            <person name="Chris Lee P."/>
            <person name="Holtzapple E.K."/>
            <person name="Scanlan D."/>
            <person name="Tran K."/>
            <person name="Moazzez A."/>
            <person name="Utterback T.R."/>
            <person name="Rizzo M."/>
            <person name="Lee K."/>
            <person name="Kosack D."/>
            <person name="Moestl D."/>
            <person name="Wedler H."/>
            <person name="Lauber J."/>
            <person name="Stjepandic D."/>
            <person name="Hoheisel J."/>
            <person name="Straetz M."/>
            <person name="Heim S."/>
            <person name="Kiewitz C."/>
            <person name="Eisen J.A."/>
            <person name="Timmis K.N."/>
            <person name="Duesterhoeft A."/>
            <person name="Tuemmler B."/>
            <person name="Fraser C.M."/>
        </authorList>
    </citation>
    <scope>NUCLEOTIDE SEQUENCE [LARGE SCALE GENOMIC DNA]</scope>
    <source>
        <strain>ATCC 47054 / DSM 6125 / CFBP 8728 / NCIMB 11950 / KT2440</strain>
    </source>
</reference>
<keyword id="KW-1185">Reference proteome</keyword>
<organism>
    <name type="scientific">Pseudomonas putida (strain ATCC 47054 / DSM 6125 / CFBP 8728 / NCIMB 11950 / KT2440)</name>
    <dbReference type="NCBI Taxonomy" id="160488"/>
    <lineage>
        <taxon>Bacteria</taxon>
        <taxon>Pseudomonadati</taxon>
        <taxon>Pseudomonadota</taxon>
        <taxon>Gammaproteobacteria</taxon>
        <taxon>Pseudomonadales</taxon>
        <taxon>Pseudomonadaceae</taxon>
        <taxon>Pseudomonas</taxon>
    </lineage>
</organism>
<feature type="chain" id="PRO_0000215735" description="ATP-dependent Clp protease adapter protein ClpS">
    <location>
        <begin position="1"/>
        <end position="120"/>
    </location>
</feature>
<feature type="region of interest" description="Disordered" evidence="2">
    <location>
        <begin position="1"/>
        <end position="27"/>
    </location>
</feature>